<comment type="subcellular location">
    <subcellularLocation>
        <location evidence="1">Spore core</location>
    </subcellularLocation>
</comment>
<comment type="induction">
    <text evidence="1">Expressed only in the forespore compartment of sporulating cells.</text>
</comment>
<comment type="similarity">
    <text evidence="1">Belongs to the SspK family.</text>
</comment>
<protein>
    <recommendedName>
        <fullName evidence="1">Small, acid-soluble spore protein K</fullName>
        <shortName evidence="1">SASP K</shortName>
    </recommendedName>
</protein>
<proteinExistence type="inferred from homology"/>
<accession>Q5L2U0</accession>
<organism>
    <name type="scientific">Geobacillus kaustophilus (strain HTA426)</name>
    <dbReference type="NCBI Taxonomy" id="235909"/>
    <lineage>
        <taxon>Bacteria</taxon>
        <taxon>Bacillati</taxon>
        <taxon>Bacillota</taxon>
        <taxon>Bacilli</taxon>
        <taxon>Bacillales</taxon>
        <taxon>Anoxybacillaceae</taxon>
        <taxon>Geobacillus</taxon>
        <taxon>Geobacillus thermoleovorans group</taxon>
    </lineage>
</organism>
<name>SSPK_GEOKA</name>
<evidence type="ECO:0000255" key="1">
    <source>
        <dbReference type="HAMAP-Rule" id="MF_01504"/>
    </source>
</evidence>
<evidence type="ECO:0000256" key="2">
    <source>
        <dbReference type="SAM" id="MobiDB-lite"/>
    </source>
</evidence>
<dbReference type="EMBL" id="BA000043">
    <property type="protein sequence ID" value="BAD74740.1"/>
    <property type="molecule type" value="Genomic_DNA"/>
</dbReference>
<dbReference type="RefSeq" id="WP_011229959.1">
    <property type="nucleotide sequence ID" value="NC_006510.1"/>
</dbReference>
<dbReference type="SMR" id="Q5L2U0"/>
<dbReference type="STRING" id="235909.GK0455"/>
<dbReference type="KEGG" id="gka:GK0455"/>
<dbReference type="eggNOG" id="ENOG5033JD2">
    <property type="taxonomic scope" value="Bacteria"/>
</dbReference>
<dbReference type="HOGENOM" id="CLU_204383_0_0_9"/>
<dbReference type="Proteomes" id="UP000001172">
    <property type="component" value="Chromosome"/>
</dbReference>
<dbReference type="GO" id="GO:0042601">
    <property type="term" value="C:endospore-forming forespore"/>
    <property type="evidence" value="ECO:0007669"/>
    <property type="project" value="InterPro"/>
</dbReference>
<dbReference type="GO" id="GO:0030436">
    <property type="term" value="P:asexual sporulation"/>
    <property type="evidence" value="ECO:0007669"/>
    <property type="project" value="UniProtKB-UniRule"/>
</dbReference>
<dbReference type="GO" id="GO:0030435">
    <property type="term" value="P:sporulation resulting in formation of a cellular spore"/>
    <property type="evidence" value="ECO:0007669"/>
    <property type="project" value="UniProtKB-KW"/>
</dbReference>
<dbReference type="HAMAP" id="MF_01504">
    <property type="entry name" value="SspK"/>
    <property type="match status" value="1"/>
</dbReference>
<dbReference type="InterPro" id="IPR012611">
    <property type="entry name" value="SASP_SspK"/>
</dbReference>
<dbReference type="NCBIfam" id="NF002843">
    <property type="entry name" value="PRK03081.1"/>
    <property type="match status" value="1"/>
</dbReference>
<dbReference type="NCBIfam" id="TIGR03091">
    <property type="entry name" value="SASP_sspK"/>
    <property type="match status" value="1"/>
</dbReference>
<dbReference type="Pfam" id="PF08176">
    <property type="entry name" value="SspK"/>
    <property type="match status" value="1"/>
</dbReference>
<gene>
    <name evidence="1" type="primary">sspK</name>
    <name type="ordered locus">GK0455</name>
</gene>
<reference key="1">
    <citation type="journal article" date="2004" name="Nucleic Acids Res.">
        <title>Thermoadaptation trait revealed by the genome sequence of thermophilic Geobacillus kaustophilus.</title>
        <authorList>
            <person name="Takami H."/>
            <person name="Takaki Y."/>
            <person name="Chee G.-J."/>
            <person name="Nishi S."/>
            <person name="Shimamura S."/>
            <person name="Suzuki H."/>
            <person name="Matsui S."/>
            <person name="Uchiyama I."/>
        </authorList>
    </citation>
    <scope>NUCLEOTIDE SEQUENCE [LARGE SCALE GENOMIC DNA]</scope>
    <source>
        <strain>HTA426</strain>
    </source>
</reference>
<keyword id="KW-1185">Reference proteome</keyword>
<keyword id="KW-0749">Sporulation</keyword>
<feature type="chain" id="PRO_0000221465" description="Small, acid-soluble spore protein K">
    <location>
        <begin position="1"/>
        <end position="53"/>
    </location>
</feature>
<feature type="region of interest" description="Disordered" evidence="2">
    <location>
        <begin position="1"/>
        <end position="53"/>
    </location>
</feature>
<feature type="compositionally biased region" description="Basic and acidic residues" evidence="2">
    <location>
        <begin position="16"/>
        <end position="32"/>
    </location>
</feature>
<feature type="compositionally biased region" description="Basic and acidic residues" evidence="2">
    <location>
        <begin position="39"/>
        <end position="53"/>
    </location>
</feature>
<sequence>MRNKAHNFPNQNNNKLEGEPRAKAEYASKRADGTTNTHPQERMRASGERSDFF</sequence>